<evidence type="ECO:0000255" key="1">
    <source>
        <dbReference type="HAMAP-Rule" id="MF_00451"/>
    </source>
</evidence>
<organism>
    <name type="scientific">Exiguobacterium sibiricum (strain DSM 17290 / CCUG 55495 / CIP 109462 / JCM 13490 / 255-15)</name>
    <dbReference type="NCBI Taxonomy" id="262543"/>
    <lineage>
        <taxon>Bacteria</taxon>
        <taxon>Bacillati</taxon>
        <taxon>Bacillota</taxon>
        <taxon>Bacilli</taxon>
        <taxon>Bacillales</taxon>
        <taxon>Bacillales Family XII. Incertae Sedis</taxon>
        <taxon>Exiguobacterium</taxon>
    </lineage>
</organism>
<dbReference type="EC" id="2.7.4.6" evidence="1"/>
<dbReference type="EMBL" id="CP001022">
    <property type="protein sequence ID" value="ACB61249.1"/>
    <property type="molecule type" value="Genomic_DNA"/>
</dbReference>
<dbReference type="RefSeq" id="WP_012370667.1">
    <property type="nucleotide sequence ID" value="NC_010556.1"/>
</dbReference>
<dbReference type="SMR" id="B1YI22"/>
<dbReference type="STRING" id="262543.Exig_1797"/>
<dbReference type="KEGG" id="esi:Exig_1797"/>
<dbReference type="eggNOG" id="COG0105">
    <property type="taxonomic scope" value="Bacteria"/>
</dbReference>
<dbReference type="HOGENOM" id="CLU_060216_6_3_9"/>
<dbReference type="OrthoDB" id="9801161at2"/>
<dbReference type="Proteomes" id="UP000001681">
    <property type="component" value="Chromosome"/>
</dbReference>
<dbReference type="GO" id="GO:0005737">
    <property type="term" value="C:cytoplasm"/>
    <property type="evidence" value="ECO:0007669"/>
    <property type="project" value="UniProtKB-SubCell"/>
</dbReference>
<dbReference type="GO" id="GO:0005524">
    <property type="term" value="F:ATP binding"/>
    <property type="evidence" value="ECO:0007669"/>
    <property type="project" value="UniProtKB-UniRule"/>
</dbReference>
<dbReference type="GO" id="GO:0046872">
    <property type="term" value="F:metal ion binding"/>
    <property type="evidence" value="ECO:0007669"/>
    <property type="project" value="UniProtKB-KW"/>
</dbReference>
<dbReference type="GO" id="GO:0004550">
    <property type="term" value="F:nucleoside diphosphate kinase activity"/>
    <property type="evidence" value="ECO:0007669"/>
    <property type="project" value="UniProtKB-UniRule"/>
</dbReference>
<dbReference type="GO" id="GO:0006241">
    <property type="term" value="P:CTP biosynthetic process"/>
    <property type="evidence" value="ECO:0007669"/>
    <property type="project" value="UniProtKB-UniRule"/>
</dbReference>
<dbReference type="GO" id="GO:0006183">
    <property type="term" value="P:GTP biosynthetic process"/>
    <property type="evidence" value="ECO:0007669"/>
    <property type="project" value="UniProtKB-UniRule"/>
</dbReference>
<dbReference type="GO" id="GO:0006228">
    <property type="term" value="P:UTP biosynthetic process"/>
    <property type="evidence" value="ECO:0007669"/>
    <property type="project" value="UniProtKB-UniRule"/>
</dbReference>
<dbReference type="CDD" id="cd04413">
    <property type="entry name" value="NDPk_I"/>
    <property type="match status" value="1"/>
</dbReference>
<dbReference type="FunFam" id="3.30.70.141:FF:000002">
    <property type="entry name" value="Nucleoside diphosphate kinase"/>
    <property type="match status" value="1"/>
</dbReference>
<dbReference type="Gene3D" id="3.30.70.141">
    <property type="entry name" value="Nucleoside diphosphate kinase-like domain"/>
    <property type="match status" value="1"/>
</dbReference>
<dbReference type="HAMAP" id="MF_00451">
    <property type="entry name" value="NDP_kinase"/>
    <property type="match status" value="1"/>
</dbReference>
<dbReference type="InterPro" id="IPR034907">
    <property type="entry name" value="NDK-like_dom"/>
</dbReference>
<dbReference type="InterPro" id="IPR036850">
    <property type="entry name" value="NDK-like_dom_sf"/>
</dbReference>
<dbReference type="InterPro" id="IPR001564">
    <property type="entry name" value="Nucleoside_diP_kinase"/>
</dbReference>
<dbReference type="InterPro" id="IPR023005">
    <property type="entry name" value="Nucleoside_diP_kinase_AS"/>
</dbReference>
<dbReference type="NCBIfam" id="NF001908">
    <property type="entry name" value="PRK00668.1"/>
    <property type="match status" value="1"/>
</dbReference>
<dbReference type="PANTHER" id="PTHR11349">
    <property type="entry name" value="NUCLEOSIDE DIPHOSPHATE KINASE"/>
    <property type="match status" value="1"/>
</dbReference>
<dbReference type="Pfam" id="PF00334">
    <property type="entry name" value="NDK"/>
    <property type="match status" value="1"/>
</dbReference>
<dbReference type="PRINTS" id="PR01243">
    <property type="entry name" value="NUCDPKINASE"/>
</dbReference>
<dbReference type="SMART" id="SM00562">
    <property type="entry name" value="NDK"/>
    <property type="match status" value="1"/>
</dbReference>
<dbReference type="SUPFAM" id="SSF54919">
    <property type="entry name" value="Nucleoside diphosphate kinase, NDK"/>
    <property type="match status" value="1"/>
</dbReference>
<dbReference type="PROSITE" id="PS00469">
    <property type="entry name" value="NDPK"/>
    <property type="match status" value="1"/>
</dbReference>
<dbReference type="PROSITE" id="PS51374">
    <property type="entry name" value="NDPK_LIKE"/>
    <property type="match status" value="1"/>
</dbReference>
<accession>B1YI22</accession>
<proteinExistence type="inferred from homology"/>
<keyword id="KW-0067">ATP-binding</keyword>
<keyword id="KW-0963">Cytoplasm</keyword>
<keyword id="KW-0418">Kinase</keyword>
<keyword id="KW-0460">Magnesium</keyword>
<keyword id="KW-0479">Metal-binding</keyword>
<keyword id="KW-0546">Nucleotide metabolism</keyword>
<keyword id="KW-0547">Nucleotide-binding</keyword>
<keyword id="KW-0597">Phosphoprotein</keyword>
<keyword id="KW-1185">Reference proteome</keyword>
<keyword id="KW-0808">Transferase</keyword>
<feature type="chain" id="PRO_1000124966" description="Nucleoside diphosphate kinase">
    <location>
        <begin position="1"/>
        <end position="138"/>
    </location>
</feature>
<feature type="active site" description="Pros-phosphohistidine intermediate" evidence="1">
    <location>
        <position position="115"/>
    </location>
</feature>
<feature type="binding site" evidence="1">
    <location>
        <position position="9"/>
    </location>
    <ligand>
        <name>ATP</name>
        <dbReference type="ChEBI" id="CHEBI:30616"/>
    </ligand>
</feature>
<feature type="binding site" evidence="1">
    <location>
        <position position="57"/>
    </location>
    <ligand>
        <name>ATP</name>
        <dbReference type="ChEBI" id="CHEBI:30616"/>
    </ligand>
</feature>
<feature type="binding site" evidence="1">
    <location>
        <position position="85"/>
    </location>
    <ligand>
        <name>ATP</name>
        <dbReference type="ChEBI" id="CHEBI:30616"/>
    </ligand>
</feature>
<feature type="binding site" evidence="1">
    <location>
        <position position="91"/>
    </location>
    <ligand>
        <name>ATP</name>
        <dbReference type="ChEBI" id="CHEBI:30616"/>
    </ligand>
</feature>
<feature type="binding site" evidence="1">
    <location>
        <position position="102"/>
    </location>
    <ligand>
        <name>ATP</name>
        <dbReference type="ChEBI" id="CHEBI:30616"/>
    </ligand>
</feature>
<feature type="binding site" evidence="1">
    <location>
        <position position="112"/>
    </location>
    <ligand>
        <name>ATP</name>
        <dbReference type="ChEBI" id="CHEBI:30616"/>
    </ligand>
</feature>
<comment type="function">
    <text evidence="1">Major role in the synthesis of nucleoside triphosphates other than ATP. The ATP gamma phosphate is transferred to the NDP beta phosphate via a ping-pong mechanism, using a phosphorylated active-site intermediate.</text>
</comment>
<comment type="catalytic activity">
    <reaction evidence="1">
        <text>a 2'-deoxyribonucleoside 5'-diphosphate + ATP = a 2'-deoxyribonucleoside 5'-triphosphate + ADP</text>
        <dbReference type="Rhea" id="RHEA:44640"/>
        <dbReference type="ChEBI" id="CHEBI:30616"/>
        <dbReference type="ChEBI" id="CHEBI:61560"/>
        <dbReference type="ChEBI" id="CHEBI:73316"/>
        <dbReference type="ChEBI" id="CHEBI:456216"/>
        <dbReference type="EC" id="2.7.4.6"/>
    </reaction>
</comment>
<comment type="catalytic activity">
    <reaction evidence="1">
        <text>a ribonucleoside 5'-diphosphate + ATP = a ribonucleoside 5'-triphosphate + ADP</text>
        <dbReference type="Rhea" id="RHEA:18113"/>
        <dbReference type="ChEBI" id="CHEBI:30616"/>
        <dbReference type="ChEBI" id="CHEBI:57930"/>
        <dbReference type="ChEBI" id="CHEBI:61557"/>
        <dbReference type="ChEBI" id="CHEBI:456216"/>
        <dbReference type="EC" id="2.7.4.6"/>
    </reaction>
</comment>
<comment type="cofactor">
    <cofactor evidence="1">
        <name>Mg(2+)</name>
        <dbReference type="ChEBI" id="CHEBI:18420"/>
    </cofactor>
</comment>
<comment type="subunit">
    <text evidence="1">Homotetramer.</text>
</comment>
<comment type="subcellular location">
    <subcellularLocation>
        <location evidence="1">Cytoplasm</location>
    </subcellularLocation>
</comment>
<comment type="similarity">
    <text evidence="1">Belongs to the NDK family.</text>
</comment>
<name>NDK_EXIS2</name>
<sequence length="138" mass="15337">MEQTFLMVKPDGVERGLIGEIIARIERKGFVIREMKMMQVTEELAQAHYAEHAEKPFFGELVTFLTSGPVVALRVEGEDVVTVSRMMIGKTKPTEALPGTIRGDFANTMSENVIHGSDSVESAERELGLWFQGQPLNV</sequence>
<reference key="1">
    <citation type="submission" date="2008-04" db="EMBL/GenBank/DDBJ databases">
        <title>Complete sequence of chromosome of Exiguobacterium sibiricum 255-15.</title>
        <authorList>
            <consortium name="US DOE Joint Genome Institute"/>
            <person name="Copeland A."/>
            <person name="Lucas S."/>
            <person name="Lapidus A."/>
            <person name="Glavina del Rio T."/>
            <person name="Dalin E."/>
            <person name="Tice H."/>
            <person name="Bruce D."/>
            <person name="Goodwin L."/>
            <person name="Pitluck S."/>
            <person name="Kiss H."/>
            <person name="Chertkov O."/>
            <person name="Monk C."/>
            <person name="Brettin T."/>
            <person name="Detter J.C."/>
            <person name="Han C."/>
            <person name="Kuske C.R."/>
            <person name="Schmutz J."/>
            <person name="Larimer F."/>
            <person name="Land M."/>
            <person name="Hauser L."/>
            <person name="Kyrpides N."/>
            <person name="Mikhailova N."/>
            <person name="Vishnivetskaya T."/>
            <person name="Rodrigues D.F."/>
            <person name="Gilichinsky D."/>
            <person name="Tiedje J."/>
            <person name="Richardson P."/>
        </authorList>
    </citation>
    <scope>NUCLEOTIDE SEQUENCE [LARGE SCALE GENOMIC DNA]</scope>
    <source>
        <strain>DSM 17290 / CCUG 55495 / CIP 109462 / JCM 13490 / 255-15</strain>
    </source>
</reference>
<gene>
    <name evidence="1" type="primary">ndk</name>
    <name type="ordered locus">Exig_1797</name>
</gene>
<protein>
    <recommendedName>
        <fullName evidence="1">Nucleoside diphosphate kinase</fullName>
        <shortName evidence="1">NDK</shortName>
        <shortName evidence="1">NDP kinase</shortName>
        <ecNumber evidence="1">2.7.4.6</ecNumber>
    </recommendedName>
    <alternativeName>
        <fullName evidence="1">Nucleoside-2-P kinase</fullName>
    </alternativeName>
</protein>